<accession>Q8JN65</accession>
<dbReference type="EMBL" id="DQ106414">
    <property type="protein sequence ID" value="AAL92454.1"/>
    <property type="molecule type" value="Genomic_DNA"/>
</dbReference>
<dbReference type="RefSeq" id="YP_001552257.1">
    <property type="nucleotide sequence ID" value="NC_009989.1"/>
</dbReference>
<dbReference type="SMR" id="Q8JN65"/>
<dbReference type="KEGG" id="vg:10973871"/>
<dbReference type="OrthoDB" id="4492at10239"/>
<dbReference type="Proteomes" id="UP000136605">
    <property type="component" value="Genome"/>
</dbReference>
<dbReference type="GO" id="GO:0042025">
    <property type="term" value="C:host cell nucleus"/>
    <property type="evidence" value="ECO:0007669"/>
    <property type="project" value="UniProtKB-SubCell"/>
</dbReference>
<dbReference type="GO" id="GO:0019028">
    <property type="term" value="C:viral capsid"/>
    <property type="evidence" value="ECO:0007669"/>
    <property type="project" value="UniProtKB-UniRule"/>
</dbReference>
<dbReference type="GO" id="GO:0003677">
    <property type="term" value="F:DNA binding"/>
    <property type="evidence" value="ECO:0007669"/>
    <property type="project" value="UniProtKB-UniRule"/>
</dbReference>
<dbReference type="GO" id="GO:0008270">
    <property type="term" value="F:zinc ion binding"/>
    <property type="evidence" value="ECO:0007669"/>
    <property type="project" value="UniProtKB-UniRule"/>
</dbReference>
<dbReference type="GO" id="GO:0006260">
    <property type="term" value="P:DNA replication"/>
    <property type="evidence" value="ECO:0007669"/>
    <property type="project" value="UniProtKB-KW"/>
</dbReference>
<dbReference type="GO" id="GO:0006351">
    <property type="term" value="P:DNA-templated transcription"/>
    <property type="evidence" value="ECO:0007669"/>
    <property type="project" value="UniProtKB-UniRule"/>
</dbReference>
<dbReference type="GO" id="GO:0045740">
    <property type="term" value="P:positive regulation of DNA replication"/>
    <property type="evidence" value="ECO:0007669"/>
    <property type="project" value="UniProtKB-UniRule"/>
</dbReference>
<dbReference type="GO" id="GO:0039687">
    <property type="term" value="P:viral DNA strand displacement replication"/>
    <property type="evidence" value="ECO:0007669"/>
    <property type="project" value="UniProtKB-UniRule"/>
</dbReference>
<dbReference type="Gene3D" id="3.90.148.10">
    <property type="entry name" value="Adenovirus DNA-binding, C-terminal domain superfamily/Adenovirus DNA-binding, zinc binding domain"/>
    <property type="match status" value="1"/>
</dbReference>
<dbReference type="Gene3D" id="1.10.269.10">
    <property type="entry name" value="Adenovirus DNA-binding, N-terminal domain"/>
    <property type="match status" value="1"/>
</dbReference>
<dbReference type="HAMAP" id="MF_04054">
    <property type="entry name" value="ADV_DNB2"/>
    <property type="match status" value="1"/>
</dbReference>
<dbReference type="InterPro" id="IPR036367">
    <property type="entry name" value="Ad_DBP_C_sf"/>
</dbReference>
<dbReference type="InterPro" id="IPR036368">
    <property type="entry name" value="ADBP_zn-bd_sf"/>
</dbReference>
<dbReference type="InterPro" id="IPR003176">
    <property type="entry name" value="Adenovirus_DNA-bd_a"/>
</dbReference>
<dbReference type="InterPro" id="IPR036362">
    <property type="entry name" value="Adenovirus_DNA-bd_N_sf"/>
</dbReference>
<dbReference type="InterPro" id="IPR005376">
    <property type="entry name" value="Adenovirus_DNA-bd_zn-bd"/>
</dbReference>
<dbReference type="InterPro" id="IPR037540">
    <property type="entry name" value="ADV_DNB2"/>
</dbReference>
<dbReference type="Pfam" id="PF02236">
    <property type="entry name" value="Viral_DNA_bi"/>
    <property type="match status" value="1"/>
</dbReference>
<dbReference type="Pfam" id="PF03728">
    <property type="entry name" value="Viral_DNA_Zn_bi"/>
    <property type="match status" value="2"/>
</dbReference>
<dbReference type="SUPFAM" id="SSF47724">
    <property type="entry name" value="Domain of early E2A DNA-binding protein, ADDBP"/>
    <property type="match status" value="1"/>
</dbReference>
<dbReference type="SUPFAM" id="SSF57917">
    <property type="entry name" value="Zn-binding domains of ADDBP"/>
    <property type="match status" value="2"/>
</dbReference>
<comment type="function">
    <text evidence="1">Plays a role in the elongation phase of viral strand displacement replication by unwinding the template in an ATP-independent fashion, employing its capacity to form multimers. Also enhances the rate of initiation. Released from template upon second strand synthesis. Assembles in complex with viral pTP, viral pol, host NFIA and host POU2F1/OCT1 on viral origin of replication. Covers the whole ssDNA genome during synthesis. The complementary strand synthesis induces its relese from DNA template. May inhibit cellular transcription mediated by the interaction between host SRCAP and CBP.</text>
</comment>
<comment type="subunit">
    <text evidence="1">Homomultimerizes on viral ssDNA bound to pTP. Forms a initiation complex with viral polymerase, pTP and hosts NFIA and POU2F1/OCT1. Interacts with host SRCAP.</text>
</comment>
<comment type="subcellular location">
    <subcellularLocation>
        <location evidence="1">Host nucleus</location>
    </subcellularLocation>
    <text evidence="1">Accumulates in infected cells.</text>
</comment>
<comment type="domain">
    <text evidence="1">The C-terminal arm bridges DBP molecules together, thereby creating a chain.</text>
</comment>
<comment type="similarity">
    <text evidence="1">Belongs to the adenoviridae E2A DNA-binding protein family.</text>
</comment>
<organism>
    <name type="scientific">Snake adenovirus serotype 1</name>
    <name type="common">SnAdV-1</name>
    <dbReference type="NCBI Taxonomy" id="189830"/>
    <lineage>
        <taxon>Viruses</taxon>
        <taxon>Varidnaviria</taxon>
        <taxon>Bamfordvirae</taxon>
        <taxon>Preplasmiviricota</taxon>
        <taxon>Tectiliviricetes</taxon>
        <taxon>Rowavirales</taxon>
        <taxon>Adenoviridae</taxon>
        <taxon>Atadenovirus</taxon>
        <taxon>Snake atadenovirus A</taxon>
    </lineage>
</organism>
<gene>
    <name evidence="1" type="primary">DBP</name>
</gene>
<name>DNB2_ADES1</name>
<feature type="chain" id="PRO_0000425929" description="DNA-binding protein">
    <location>
        <begin position="1"/>
        <end position="397"/>
    </location>
</feature>
<feature type="region of interest" description="Flexible loop" evidence="1">
    <location>
        <begin position="129"/>
        <end position="161"/>
    </location>
</feature>
<feature type="region of interest" description="C-terminal arm, DBP binding" evidence="1">
    <location>
        <begin position="335"/>
        <end position="397"/>
    </location>
</feature>
<feature type="region of interest" description="Disordered" evidence="2">
    <location>
        <begin position="338"/>
        <end position="397"/>
    </location>
</feature>
<feature type="compositionally biased region" description="Acidic residues" evidence="2">
    <location>
        <begin position="342"/>
        <end position="360"/>
    </location>
</feature>
<feature type="binding site" evidence="1">
    <location>
        <position position="116"/>
    </location>
    <ligand>
        <name>Zn(2+)</name>
        <dbReference type="ChEBI" id="CHEBI:29105"/>
        <label>1</label>
    </ligand>
</feature>
<feature type="binding site" evidence="1">
    <location>
        <position position="118"/>
    </location>
    <ligand>
        <name>Zn(2+)</name>
        <dbReference type="ChEBI" id="CHEBI:29105"/>
        <label>1</label>
    </ligand>
</feature>
<feature type="binding site" evidence="1">
    <location>
        <position position="169"/>
    </location>
    <ligand>
        <name>Zn(2+)</name>
        <dbReference type="ChEBI" id="CHEBI:29105"/>
        <label>1</label>
    </ligand>
</feature>
<feature type="binding site" evidence="1">
    <location>
        <position position="185"/>
    </location>
    <ligand>
        <name>Zn(2+)</name>
        <dbReference type="ChEBI" id="CHEBI:29105"/>
        <label>1</label>
    </ligand>
</feature>
<feature type="binding site" evidence="1">
    <location>
        <position position="225"/>
    </location>
    <ligand>
        <name>Zn(2+)</name>
        <dbReference type="ChEBI" id="CHEBI:29105"/>
        <label>2</label>
    </ligand>
</feature>
<feature type="binding site" evidence="1">
    <location>
        <position position="227"/>
    </location>
    <ligand>
        <name>Zn(2+)</name>
        <dbReference type="ChEBI" id="CHEBI:29105"/>
        <label>2</label>
    </ligand>
</feature>
<feature type="binding site" evidence="1">
    <location>
        <position position="276"/>
    </location>
    <ligand>
        <name>Zn(2+)</name>
        <dbReference type="ChEBI" id="CHEBI:29105"/>
        <label>2</label>
    </ligand>
</feature>
<feature type="binding site" evidence="1">
    <location>
        <position position="289"/>
    </location>
    <ligand>
        <name>Zn(2+)</name>
        <dbReference type="ChEBI" id="CHEBI:29105"/>
        <label>2</label>
    </ligand>
</feature>
<proteinExistence type="inferred from homology"/>
<sequence>MSLSKTKNPALLAGPGDEAKEKVQAALELLHKFGSAFKVDTAGFSFHPESPECDKIFGAYLKNVKHVPTYSSAKTLTSVGGRILYAATCQYVKLTPVTNLTGCTLWEHGWGQNLKCYHGEGMCRKKNEIEMAATSESGVAALKEGRGAVEINRWGRQVVKITQENYVICMEDLQSRFNQPSANSCGLSFSDSDKARSAMENATELTRSIFSQAKMDHLLFMPICCYCNYGGKMILGRQLCKLTPFSISGTEGLREEDVSPVQAVSVRHPAVFVFQCCNATGGSKGKTSCDFKISHADLLQVLNLVRKMWLEVMGYPMPIHFPRFKWSPSLRVKNALLPEGSVNEDENPFGLDNSEDEEEVVPPSPPSPARKRTRTTVAEVHHKKKKKIVLESSEEDE</sequence>
<organismHost>
    <name type="scientific">Pantherophis guttatus</name>
    <name type="common">Corn snake</name>
    <name type="synonym">Elaphe guttata</name>
    <dbReference type="NCBI Taxonomy" id="94885"/>
</organismHost>
<keyword id="KW-0235">DNA replication</keyword>
<keyword id="KW-0238">DNA-binding</keyword>
<keyword id="KW-0244">Early protein</keyword>
<keyword id="KW-1048">Host nucleus</keyword>
<keyword id="KW-0945">Host-virus interaction</keyword>
<keyword id="KW-0479">Metal-binding</keyword>
<keyword id="KW-0597">Phosphoprotein</keyword>
<keyword id="KW-1185">Reference proteome</keyword>
<keyword id="KW-1194">Viral DNA replication</keyword>
<keyword id="KW-0862">Zinc</keyword>
<evidence type="ECO:0000255" key="1">
    <source>
        <dbReference type="HAMAP-Rule" id="MF_04054"/>
    </source>
</evidence>
<evidence type="ECO:0000256" key="2">
    <source>
        <dbReference type="SAM" id="MobiDB-lite"/>
    </source>
</evidence>
<reference key="1">
    <citation type="journal article" date="2002" name="J. Gen. Virol.">
        <title>Genetic analysis of an adenovirus isolated from corn snake (Elaphe guttata) implies common origin with the members of the proposed new genus Atadenovirus.</title>
        <authorList>
            <person name="Farkas S.L."/>
            <person name="Benko M."/>
            <person name="Elo P.T."/>
            <person name="Ursu K."/>
            <person name="Dan A."/>
            <person name="Ahne W."/>
            <person name="Harrach B."/>
        </authorList>
    </citation>
    <scope>NUCLEOTIDE SEQUENCE [GENOMIC DNA]</scope>
</reference>
<protein>
    <recommendedName>
        <fullName evidence="1">DNA-binding protein</fullName>
        <shortName evidence="1">DBP</shortName>
    </recommendedName>
    <alternativeName>
        <fullName evidence="1">Early 2A protein</fullName>
    </alternativeName>
    <alternativeName>
        <fullName evidence="1">Early E2A DNA-binding protein</fullName>
    </alternativeName>
</protein>